<organism>
    <name type="scientific">Parafrankia sp. (strain EAN1pec)</name>
    <dbReference type="NCBI Taxonomy" id="298653"/>
    <lineage>
        <taxon>Bacteria</taxon>
        <taxon>Bacillati</taxon>
        <taxon>Actinomycetota</taxon>
        <taxon>Actinomycetes</taxon>
        <taxon>Frankiales</taxon>
        <taxon>Frankiaceae</taxon>
        <taxon>Parafrankia</taxon>
    </lineage>
</organism>
<name>NB_PARS2</name>
<accession>A8LDK0</accession>
<evidence type="ECO:0000255" key="1">
    <source>
        <dbReference type="HAMAP-Rule" id="MF_01297"/>
    </source>
</evidence>
<evidence type="ECO:0000256" key="2">
    <source>
        <dbReference type="SAM" id="MobiDB-lite"/>
    </source>
</evidence>
<protein>
    <recommendedName>
        <fullName>Peroxynitrite isomerase</fullName>
        <ecNumber evidence="1">5.99.-.-</ecNumber>
    </recommendedName>
    <alternativeName>
        <fullName>Ferric nitrobindin</fullName>
        <shortName>Nb(III)</shortName>
    </alternativeName>
</protein>
<comment type="function">
    <text evidence="1">Heme-binding protein able to scavenge peroxynitrite and to protect free L-tyrosine against peroxynitrite-mediated nitration, by acting as a peroxynitrite isomerase that converts peroxynitrite to nitrate. Therefore, this protein likely plays a role in peroxynitrite sensing and in the detoxification of reactive nitrogen and oxygen species (RNS and ROS, respectively). Is able to bind nitric oxide (NO) in vitro, but may act as a sensor of peroxynitrite levels in vivo.</text>
</comment>
<comment type="catalytic activity">
    <reaction evidence="1">
        <text>peroxynitrite = nitrate</text>
        <dbReference type="Rhea" id="RHEA:63116"/>
        <dbReference type="ChEBI" id="CHEBI:17632"/>
        <dbReference type="ChEBI" id="CHEBI:25941"/>
    </reaction>
    <physiologicalReaction direction="left-to-right" evidence="1">
        <dbReference type="Rhea" id="RHEA:63117"/>
    </physiologicalReaction>
</comment>
<comment type="cofactor">
    <cofactor evidence="1">
        <name>heme b</name>
        <dbReference type="ChEBI" id="CHEBI:60344"/>
    </cofactor>
    <text evidence="1">Binds 1 heme b group per subunit, that coordinates a highly solvent-exposed Fe(III) atom.</text>
</comment>
<comment type="pathway">
    <text evidence="1">Nitrogen metabolism.</text>
</comment>
<comment type="subunit">
    <text evidence="1">Homodimer.</text>
</comment>
<comment type="domain">
    <text evidence="1">Forms a 10-stranded antiparallel beta-barrel structure able to accommodate a hydrophobic ligand in its interior. In fact, this fold hosts the heme group, which is located in a wide surface cleft.</text>
</comment>
<comment type="similarity">
    <text evidence="1">Belongs to the nitrobindin family.</text>
</comment>
<reference key="1">
    <citation type="journal article" date="2007" name="Genome Res.">
        <title>Genome characteristics of facultatively symbiotic Frankia sp. strains reflect host range and host plant biogeography.</title>
        <authorList>
            <person name="Normand P."/>
            <person name="Lapierre P."/>
            <person name="Tisa L.S."/>
            <person name="Gogarten J.P."/>
            <person name="Alloisio N."/>
            <person name="Bagnarol E."/>
            <person name="Bassi C.A."/>
            <person name="Berry A.M."/>
            <person name="Bickhart D.M."/>
            <person name="Choisne N."/>
            <person name="Couloux A."/>
            <person name="Cournoyer B."/>
            <person name="Cruveiller S."/>
            <person name="Daubin V."/>
            <person name="Demange N."/>
            <person name="Francino M.P."/>
            <person name="Goltsman E."/>
            <person name="Huang Y."/>
            <person name="Kopp O.R."/>
            <person name="Labarre L."/>
            <person name="Lapidus A."/>
            <person name="Lavire C."/>
            <person name="Marechal J."/>
            <person name="Martinez M."/>
            <person name="Mastronunzio J.E."/>
            <person name="Mullin B.C."/>
            <person name="Niemann J."/>
            <person name="Pujic P."/>
            <person name="Rawnsley T."/>
            <person name="Rouy Z."/>
            <person name="Schenowitz C."/>
            <person name="Sellstedt A."/>
            <person name="Tavares F."/>
            <person name="Tomkins J.P."/>
            <person name="Vallenet D."/>
            <person name="Valverde C."/>
            <person name="Wall L.G."/>
            <person name="Wang Y."/>
            <person name="Medigue C."/>
            <person name="Benson D.R."/>
        </authorList>
    </citation>
    <scope>NUCLEOTIDE SEQUENCE [LARGE SCALE GENOMIC DNA]</scope>
    <source>
        <strain>EAN1pec</strain>
    </source>
</reference>
<dbReference type="EC" id="5.99.-.-" evidence="1"/>
<dbReference type="EMBL" id="CP000820">
    <property type="protein sequence ID" value="ABW15508.1"/>
    <property type="molecule type" value="Genomic_DNA"/>
</dbReference>
<dbReference type="RefSeq" id="WP_020463586.1">
    <property type="nucleotide sequence ID" value="NC_009921.1"/>
</dbReference>
<dbReference type="SMR" id="A8LDK0"/>
<dbReference type="STRING" id="298653.Franean1_6164"/>
<dbReference type="KEGG" id="fre:Franean1_6164"/>
<dbReference type="eggNOG" id="COG3485">
    <property type="taxonomic scope" value="Bacteria"/>
</dbReference>
<dbReference type="HOGENOM" id="CLU_085483_0_0_11"/>
<dbReference type="GO" id="GO:0020037">
    <property type="term" value="F:heme binding"/>
    <property type="evidence" value="ECO:0007669"/>
    <property type="project" value="UniProtKB-UniRule"/>
</dbReference>
<dbReference type="GO" id="GO:0046872">
    <property type="term" value="F:metal ion binding"/>
    <property type="evidence" value="ECO:0007669"/>
    <property type="project" value="UniProtKB-KW"/>
</dbReference>
<dbReference type="GO" id="GO:0062213">
    <property type="term" value="F:peroxynitrite isomerase activity"/>
    <property type="evidence" value="ECO:0007669"/>
    <property type="project" value="UniProtKB-UniRule"/>
</dbReference>
<dbReference type="CDD" id="cd07828">
    <property type="entry name" value="lipocalin_heme-bd-THAP4-like"/>
    <property type="match status" value="1"/>
</dbReference>
<dbReference type="Gene3D" id="2.40.128.20">
    <property type="match status" value="1"/>
</dbReference>
<dbReference type="HAMAP" id="MF_01297">
    <property type="entry name" value="nitrobindin"/>
    <property type="match status" value="1"/>
</dbReference>
<dbReference type="InterPro" id="IPR012674">
    <property type="entry name" value="Calycin"/>
</dbReference>
<dbReference type="InterPro" id="IPR022939">
    <property type="entry name" value="Nb(III)_bact/plant"/>
</dbReference>
<dbReference type="InterPro" id="IPR045165">
    <property type="entry name" value="Nitrobindin"/>
</dbReference>
<dbReference type="InterPro" id="IPR014878">
    <property type="entry name" value="THAP4-like_heme-bd"/>
</dbReference>
<dbReference type="PANTHER" id="PTHR15854:SF4">
    <property type="entry name" value="PEROXYNITRITE ISOMERASE THAP4"/>
    <property type="match status" value="1"/>
</dbReference>
<dbReference type="PANTHER" id="PTHR15854">
    <property type="entry name" value="THAP4 PROTEIN"/>
    <property type="match status" value="1"/>
</dbReference>
<dbReference type="Pfam" id="PF08768">
    <property type="entry name" value="THAP4_heme-bd"/>
    <property type="match status" value="1"/>
</dbReference>
<dbReference type="SUPFAM" id="SSF50814">
    <property type="entry name" value="Lipocalins"/>
    <property type="match status" value="1"/>
</dbReference>
<feature type="chain" id="PRO_0000356907" description="Peroxynitrite isomerase">
    <location>
        <begin position="1"/>
        <end position="213"/>
    </location>
</feature>
<feature type="region of interest" description="Disordered" evidence="2">
    <location>
        <begin position="1"/>
        <end position="26"/>
    </location>
</feature>
<feature type="short sequence motif" description="GXWXGXG" evidence="1">
    <location>
        <begin position="51"/>
        <end position="57"/>
    </location>
</feature>
<feature type="compositionally biased region" description="Low complexity" evidence="2">
    <location>
        <begin position="1"/>
        <end position="10"/>
    </location>
</feature>
<feature type="binding site" description="axial binding residue" evidence="1">
    <location>
        <position position="203"/>
    </location>
    <ligand>
        <name>heme b</name>
        <dbReference type="ChEBI" id="CHEBI:60344"/>
    </ligand>
    <ligandPart>
        <name>Fe</name>
        <dbReference type="ChEBI" id="CHEBI:18248"/>
    </ligandPart>
</feature>
<sequence>MGADATGDTAARGDRAAHGDTASGGATGGTAGNIATVDLHPSLLPLAFLVGTWRGEGVGGYEGMESFHYGQEITFAADGRPALGYVSHTWWADEPRDGREPGSPMATETGFWRVQPPATEPGPDGKVNGSPVVEVMLAHPFGIAEIYVGTVTGTRIDLDSNVLIRTATAREVTRSVRLYGLIEGGDLAYAIDMEAGGKPLQSHLSARLHRSPS</sequence>
<keyword id="KW-0349">Heme</keyword>
<keyword id="KW-0408">Iron</keyword>
<keyword id="KW-0413">Isomerase</keyword>
<keyword id="KW-0479">Metal-binding</keyword>
<gene>
    <name type="ordered locus">Franean1_6164</name>
</gene>
<proteinExistence type="inferred from homology"/>